<organism>
    <name type="scientific">Photobacterium profundum (strain SS9)</name>
    <dbReference type="NCBI Taxonomy" id="298386"/>
    <lineage>
        <taxon>Bacteria</taxon>
        <taxon>Pseudomonadati</taxon>
        <taxon>Pseudomonadota</taxon>
        <taxon>Gammaproteobacteria</taxon>
        <taxon>Vibrionales</taxon>
        <taxon>Vibrionaceae</taxon>
        <taxon>Photobacterium</taxon>
    </lineage>
</organism>
<dbReference type="EC" id="7.1.2.2" evidence="1"/>
<dbReference type="EMBL" id="CR378675">
    <property type="protein sequence ID" value="CAG22007.1"/>
    <property type="molecule type" value="Genomic_DNA"/>
</dbReference>
<dbReference type="RefSeq" id="WP_011220231.1">
    <property type="nucleotide sequence ID" value="NC_006371.1"/>
</dbReference>
<dbReference type="SMR" id="Q6LKZ8"/>
<dbReference type="STRING" id="298386.PBPRB0134"/>
<dbReference type="KEGG" id="ppr:PBPRB0134"/>
<dbReference type="eggNOG" id="COG0056">
    <property type="taxonomic scope" value="Bacteria"/>
</dbReference>
<dbReference type="HOGENOM" id="CLU_010091_2_1_6"/>
<dbReference type="Proteomes" id="UP000000593">
    <property type="component" value="Chromosome 2"/>
</dbReference>
<dbReference type="GO" id="GO:0005886">
    <property type="term" value="C:plasma membrane"/>
    <property type="evidence" value="ECO:0007669"/>
    <property type="project" value="UniProtKB-SubCell"/>
</dbReference>
<dbReference type="GO" id="GO:0045259">
    <property type="term" value="C:proton-transporting ATP synthase complex"/>
    <property type="evidence" value="ECO:0007669"/>
    <property type="project" value="UniProtKB-KW"/>
</dbReference>
<dbReference type="GO" id="GO:0043531">
    <property type="term" value="F:ADP binding"/>
    <property type="evidence" value="ECO:0007669"/>
    <property type="project" value="TreeGrafter"/>
</dbReference>
<dbReference type="GO" id="GO:0005524">
    <property type="term" value="F:ATP binding"/>
    <property type="evidence" value="ECO:0007669"/>
    <property type="project" value="UniProtKB-UniRule"/>
</dbReference>
<dbReference type="GO" id="GO:0046933">
    <property type="term" value="F:proton-transporting ATP synthase activity, rotational mechanism"/>
    <property type="evidence" value="ECO:0007669"/>
    <property type="project" value="UniProtKB-UniRule"/>
</dbReference>
<dbReference type="CDD" id="cd18113">
    <property type="entry name" value="ATP-synt_F1_alpha_C"/>
    <property type="match status" value="1"/>
</dbReference>
<dbReference type="CDD" id="cd18116">
    <property type="entry name" value="ATP-synt_F1_alpha_N"/>
    <property type="match status" value="1"/>
</dbReference>
<dbReference type="CDD" id="cd01132">
    <property type="entry name" value="F1-ATPase_alpha_CD"/>
    <property type="match status" value="1"/>
</dbReference>
<dbReference type="FunFam" id="1.20.150.20:FF:000001">
    <property type="entry name" value="ATP synthase subunit alpha"/>
    <property type="match status" value="1"/>
</dbReference>
<dbReference type="FunFam" id="2.40.30.20:FF:000001">
    <property type="entry name" value="ATP synthase subunit alpha"/>
    <property type="match status" value="1"/>
</dbReference>
<dbReference type="FunFam" id="3.40.50.300:FF:000002">
    <property type="entry name" value="ATP synthase subunit alpha"/>
    <property type="match status" value="1"/>
</dbReference>
<dbReference type="Gene3D" id="2.40.30.20">
    <property type="match status" value="1"/>
</dbReference>
<dbReference type="Gene3D" id="1.20.150.20">
    <property type="entry name" value="ATP synthase alpha/beta chain, C-terminal domain"/>
    <property type="match status" value="1"/>
</dbReference>
<dbReference type="Gene3D" id="3.40.50.300">
    <property type="entry name" value="P-loop containing nucleotide triphosphate hydrolases"/>
    <property type="match status" value="1"/>
</dbReference>
<dbReference type="HAMAP" id="MF_01346">
    <property type="entry name" value="ATP_synth_alpha_bact"/>
    <property type="match status" value="1"/>
</dbReference>
<dbReference type="InterPro" id="IPR023366">
    <property type="entry name" value="ATP_synth_asu-like_sf"/>
</dbReference>
<dbReference type="InterPro" id="IPR000793">
    <property type="entry name" value="ATP_synth_asu_C"/>
</dbReference>
<dbReference type="InterPro" id="IPR038376">
    <property type="entry name" value="ATP_synth_asu_C_sf"/>
</dbReference>
<dbReference type="InterPro" id="IPR033732">
    <property type="entry name" value="ATP_synth_F1_a_nt-bd_dom"/>
</dbReference>
<dbReference type="InterPro" id="IPR005294">
    <property type="entry name" value="ATP_synth_F1_asu"/>
</dbReference>
<dbReference type="InterPro" id="IPR020003">
    <property type="entry name" value="ATPase_a/bsu_AS"/>
</dbReference>
<dbReference type="InterPro" id="IPR004100">
    <property type="entry name" value="ATPase_F1/V1/A1_a/bsu_N"/>
</dbReference>
<dbReference type="InterPro" id="IPR036121">
    <property type="entry name" value="ATPase_F1/V1/A1_a/bsu_N_sf"/>
</dbReference>
<dbReference type="InterPro" id="IPR000194">
    <property type="entry name" value="ATPase_F1/V1/A1_a/bsu_nucl-bd"/>
</dbReference>
<dbReference type="InterPro" id="IPR027417">
    <property type="entry name" value="P-loop_NTPase"/>
</dbReference>
<dbReference type="NCBIfam" id="TIGR00962">
    <property type="entry name" value="atpA"/>
    <property type="match status" value="1"/>
</dbReference>
<dbReference type="NCBIfam" id="NF009884">
    <property type="entry name" value="PRK13343.1"/>
    <property type="match status" value="1"/>
</dbReference>
<dbReference type="PANTHER" id="PTHR48082">
    <property type="entry name" value="ATP SYNTHASE SUBUNIT ALPHA, MITOCHONDRIAL"/>
    <property type="match status" value="1"/>
</dbReference>
<dbReference type="PANTHER" id="PTHR48082:SF2">
    <property type="entry name" value="ATP SYNTHASE SUBUNIT ALPHA, MITOCHONDRIAL"/>
    <property type="match status" value="1"/>
</dbReference>
<dbReference type="Pfam" id="PF00006">
    <property type="entry name" value="ATP-synt_ab"/>
    <property type="match status" value="1"/>
</dbReference>
<dbReference type="Pfam" id="PF00306">
    <property type="entry name" value="ATP-synt_ab_C"/>
    <property type="match status" value="1"/>
</dbReference>
<dbReference type="Pfam" id="PF02874">
    <property type="entry name" value="ATP-synt_ab_N"/>
    <property type="match status" value="1"/>
</dbReference>
<dbReference type="SUPFAM" id="SSF47917">
    <property type="entry name" value="C-terminal domain of alpha and beta subunits of F1 ATP synthase"/>
    <property type="match status" value="1"/>
</dbReference>
<dbReference type="SUPFAM" id="SSF50615">
    <property type="entry name" value="N-terminal domain of alpha and beta subunits of F1 ATP synthase"/>
    <property type="match status" value="1"/>
</dbReference>
<dbReference type="SUPFAM" id="SSF52540">
    <property type="entry name" value="P-loop containing nucleoside triphosphate hydrolases"/>
    <property type="match status" value="1"/>
</dbReference>
<dbReference type="PROSITE" id="PS00152">
    <property type="entry name" value="ATPASE_ALPHA_BETA"/>
    <property type="match status" value="1"/>
</dbReference>
<proteinExistence type="inferred from homology"/>
<evidence type="ECO:0000255" key="1">
    <source>
        <dbReference type="HAMAP-Rule" id="MF_01346"/>
    </source>
</evidence>
<feature type="chain" id="PRO_0000238317" description="ATP synthase subunit alpha 2">
    <location>
        <begin position="1"/>
        <end position="513"/>
    </location>
</feature>
<feature type="binding site" evidence="1">
    <location>
        <begin position="169"/>
        <end position="176"/>
    </location>
    <ligand>
        <name>ATP</name>
        <dbReference type="ChEBI" id="CHEBI:30616"/>
    </ligand>
</feature>
<feature type="site" description="Required for activity" evidence="1">
    <location>
        <position position="373"/>
    </location>
</feature>
<reference key="1">
    <citation type="journal article" date="2005" name="Science">
        <title>Life at depth: Photobacterium profundum genome sequence and expression analysis.</title>
        <authorList>
            <person name="Vezzi A."/>
            <person name="Campanaro S."/>
            <person name="D'Angelo M."/>
            <person name="Simonato F."/>
            <person name="Vitulo N."/>
            <person name="Lauro F.M."/>
            <person name="Cestaro A."/>
            <person name="Malacrida G."/>
            <person name="Simionati B."/>
            <person name="Cannata N."/>
            <person name="Romualdi C."/>
            <person name="Bartlett D.H."/>
            <person name="Valle G."/>
        </authorList>
    </citation>
    <scope>NUCLEOTIDE SEQUENCE [LARGE SCALE GENOMIC DNA]</scope>
    <source>
        <strain>ATCC BAA-1253 / SS9</strain>
    </source>
</reference>
<accession>Q6LKZ8</accession>
<protein>
    <recommendedName>
        <fullName evidence="1">ATP synthase subunit alpha 2</fullName>
        <ecNumber evidence="1">7.1.2.2</ecNumber>
    </recommendedName>
    <alternativeName>
        <fullName evidence="1">ATP synthase F1 sector subunit alpha 2</fullName>
    </alternativeName>
    <alternativeName>
        <fullName evidence="1">F-ATPase subunit alpha 2</fullName>
    </alternativeName>
</protein>
<gene>
    <name evidence="1" type="primary">atpA2</name>
    <name type="ordered locus">PBPRB0134</name>
</gene>
<name>ATPA2_PHOPR</name>
<sequence>MQLNSNEISDLIRQRIATFNVTSQARNEGTIVSVSDGIISINGLADVMQGEMIELPGNRYALALNLERHSVGAVVMGPYSDLAEGLKVKGTGRILEVPVGRGLLGRVVNTLGQPIDGKGAIENDGYSPVEIIAPGVIERQSVDQPIQTGYKAVDAMVPIGRGQRELIIGDRQTGKTAMAIDAIINQKDSGIKCVYVAIGQKASTIANVVRKLEEHDALKNTIVVVATASDAAALQYLAPYSGCTMGEYFRDRGEDALIVYDDLSKQAVAYRQISLLLKRPPGREAFPGDVFYLHSRLLERASRVNVSYVERFTKGKVKGKTGSLTALPIIETQAGDVSAFVPTNVISITDGQIFLQTHLFNSGLRPAVDPGISVSRVGGAAQTKIVKKLSGGIRTALAQYRELAAFAQFSSDLDDATRKQLDHGEKVTELMKQKQYAPMSVAEQALAIFSAEKGYLGDVPLASIGDFESALMAYAKSEHSALLDTINKTGQYDDDIEQSLHKLLKTFTATQSW</sequence>
<comment type="function">
    <text evidence="1">Produces ATP from ADP in the presence of a proton gradient across the membrane. The alpha chain is a regulatory subunit.</text>
</comment>
<comment type="catalytic activity">
    <reaction evidence="1">
        <text>ATP + H2O + 4 H(+)(in) = ADP + phosphate + 5 H(+)(out)</text>
        <dbReference type="Rhea" id="RHEA:57720"/>
        <dbReference type="ChEBI" id="CHEBI:15377"/>
        <dbReference type="ChEBI" id="CHEBI:15378"/>
        <dbReference type="ChEBI" id="CHEBI:30616"/>
        <dbReference type="ChEBI" id="CHEBI:43474"/>
        <dbReference type="ChEBI" id="CHEBI:456216"/>
        <dbReference type="EC" id="7.1.2.2"/>
    </reaction>
</comment>
<comment type="subunit">
    <text evidence="1">F-type ATPases have 2 components, CF(1) - the catalytic core - and CF(0) - the membrane proton channel. CF(1) has five subunits: alpha(3), beta(3), gamma(1), delta(1), epsilon(1). CF(0) has three main subunits: a(1), b(2) and c(9-12). The alpha and beta chains form an alternating ring which encloses part of the gamma chain. CF(1) is attached to CF(0) by a central stalk formed by the gamma and epsilon chains, while a peripheral stalk is formed by the delta and b chains.</text>
</comment>
<comment type="subcellular location">
    <subcellularLocation>
        <location evidence="1">Cell inner membrane</location>
        <topology evidence="1">Peripheral membrane protein</topology>
    </subcellularLocation>
</comment>
<comment type="similarity">
    <text evidence="1">Belongs to the ATPase alpha/beta chains family.</text>
</comment>
<keyword id="KW-0066">ATP synthesis</keyword>
<keyword id="KW-0067">ATP-binding</keyword>
<keyword id="KW-0997">Cell inner membrane</keyword>
<keyword id="KW-1003">Cell membrane</keyword>
<keyword id="KW-0139">CF(1)</keyword>
<keyword id="KW-0375">Hydrogen ion transport</keyword>
<keyword id="KW-0406">Ion transport</keyword>
<keyword id="KW-0472">Membrane</keyword>
<keyword id="KW-0547">Nucleotide-binding</keyword>
<keyword id="KW-1185">Reference proteome</keyword>
<keyword id="KW-1278">Translocase</keyword>
<keyword id="KW-0813">Transport</keyword>